<gene>
    <name evidence="1" type="primary">tal</name>
    <name type="ordered locus">Dtur_0485</name>
</gene>
<name>TAL_DICTD</name>
<accession>B8E200</accession>
<comment type="function">
    <text evidence="1">Transaldolase is important for the balance of metabolites in the pentose-phosphate pathway.</text>
</comment>
<comment type="catalytic activity">
    <reaction evidence="1">
        <text>D-sedoheptulose 7-phosphate + D-glyceraldehyde 3-phosphate = D-erythrose 4-phosphate + beta-D-fructose 6-phosphate</text>
        <dbReference type="Rhea" id="RHEA:17053"/>
        <dbReference type="ChEBI" id="CHEBI:16897"/>
        <dbReference type="ChEBI" id="CHEBI:57483"/>
        <dbReference type="ChEBI" id="CHEBI:57634"/>
        <dbReference type="ChEBI" id="CHEBI:59776"/>
        <dbReference type="EC" id="2.2.1.2"/>
    </reaction>
</comment>
<comment type="pathway">
    <text evidence="1">Carbohydrate degradation; pentose phosphate pathway; D-glyceraldehyde 3-phosphate and beta-D-fructose 6-phosphate from D-ribose 5-phosphate and D-xylulose 5-phosphate (non-oxidative stage): step 2/3.</text>
</comment>
<comment type="subcellular location">
    <subcellularLocation>
        <location evidence="1">Cytoplasm</location>
    </subcellularLocation>
</comment>
<comment type="similarity">
    <text evidence="1">Belongs to the transaldolase family. Type 3B subfamily.</text>
</comment>
<dbReference type="EC" id="2.2.1.2" evidence="1"/>
<dbReference type="EMBL" id="CP001251">
    <property type="protein sequence ID" value="ACK41783.1"/>
    <property type="molecule type" value="Genomic_DNA"/>
</dbReference>
<dbReference type="RefSeq" id="YP_002352397.1">
    <property type="nucleotide sequence ID" value="NC_011661.1"/>
</dbReference>
<dbReference type="SMR" id="B8E200"/>
<dbReference type="FunCoup" id="B8E200">
    <property type="interactions" value="228"/>
</dbReference>
<dbReference type="STRING" id="515635.Dtur_0485"/>
<dbReference type="EnsemblBacteria" id="ACK41783">
    <property type="protein sequence ID" value="ACK41783"/>
    <property type="gene ID" value="Dtur_0485"/>
</dbReference>
<dbReference type="KEGG" id="dtu:Dtur_0485"/>
<dbReference type="PATRIC" id="fig|515635.4.peg.510"/>
<dbReference type="eggNOG" id="COG0176">
    <property type="taxonomic scope" value="Bacteria"/>
</dbReference>
<dbReference type="HOGENOM" id="CLU_079764_0_0_0"/>
<dbReference type="InParanoid" id="B8E200"/>
<dbReference type="OrthoDB" id="9807051at2"/>
<dbReference type="UniPathway" id="UPA00115">
    <property type="reaction ID" value="UER00414"/>
</dbReference>
<dbReference type="Proteomes" id="UP000007719">
    <property type="component" value="Chromosome"/>
</dbReference>
<dbReference type="GO" id="GO:0005737">
    <property type="term" value="C:cytoplasm"/>
    <property type="evidence" value="ECO:0007669"/>
    <property type="project" value="UniProtKB-SubCell"/>
</dbReference>
<dbReference type="GO" id="GO:0016832">
    <property type="term" value="F:aldehyde-lyase activity"/>
    <property type="evidence" value="ECO:0007669"/>
    <property type="project" value="InterPro"/>
</dbReference>
<dbReference type="GO" id="GO:0004801">
    <property type="term" value="F:transaldolase activity"/>
    <property type="evidence" value="ECO:0007669"/>
    <property type="project" value="UniProtKB-UniRule"/>
</dbReference>
<dbReference type="GO" id="GO:0005975">
    <property type="term" value="P:carbohydrate metabolic process"/>
    <property type="evidence" value="ECO:0007669"/>
    <property type="project" value="InterPro"/>
</dbReference>
<dbReference type="GO" id="GO:0006098">
    <property type="term" value="P:pentose-phosphate shunt"/>
    <property type="evidence" value="ECO:0007669"/>
    <property type="project" value="UniProtKB-UniRule"/>
</dbReference>
<dbReference type="CDD" id="cd00956">
    <property type="entry name" value="Transaldolase_FSA"/>
    <property type="match status" value="1"/>
</dbReference>
<dbReference type="FunFam" id="3.20.20.70:FF:000018">
    <property type="entry name" value="Probable transaldolase"/>
    <property type="match status" value="1"/>
</dbReference>
<dbReference type="Gene3D" id="3.20.20.70">
    <property type="entry name" value="Aldolase class I"/>
    <property type="match status" value="1"/>
</dbReference>
<dbReference type="HAMAP" id="MF_00494">
    <property type="entry name" value="Transaldolase_3b"/>
    <property type="match status" value="1"/>
</dbReference>
<dbReference type="InterPro" id="IPR013785">
    <property type="entry name" value="Aldolase_TIM"/>
</dbReference>
<dbReference type="InterPro" id="IPR001585">
    <property type="entry name" value="TAL/FSA"/>
</dbReference>
<dbReference type="InterPro" id="IPR022999">
    <property type="entry name" value="Transaldolase_3B"/>
</dbReference>
<dbReference type="InterPro" id="IPR004731">
    <property type="entry name" value="Transaldolase_3B/F6P_aldolase"/>
</dbReference>
<dbReference type="InterPro" id="IPR033919">
    <property type="entry name" value="TSA/FSA_arc/bac"/>
</dbReference>
<dbReference type="NCBIfam" id="TIGR00875">
    <property type="entry name" value="fsa_talC_mipB"/>
    <property type="match status" value="1"/>
</dbReference>
<dbReference type="PANTHER" id="PTHR10683:SF40">
    <property type="entry name" value="FRUCTOSE-6-PHOSPHATE ALDOLASE 1-RELATED"/>
    <property type="match status" value="1"/>
</dbReference>
<dbReference type="PANTHER" id="PTHR10683">
    <property type="entry name" value="TRANSALDOLASE"/>
    <property type="match status" value="1"/>
</dbReference>
<dbReference type="Pfam" id="PF00923">
    <property type="entry name" value="TAL_FSA"/>
    <property type="match status" value="1"/>
</dbReference>
<dbReference type="SUPFAM" id="SSF51569">
    <property type="entry name" value="Aldolase"/>
    <property type="match status" value="1"/>
</dbReference>
<keyword id="KW-0963">Cytoplasm</keyword>
<keyword id="KW-0570">Pentose shunt</keyword>
<keyword id="KW-1185">Reference proteome</keyword>
<keyword id="KW-0704">Schiff base</keyword>
<keyword id="KW-0808">Transferase</keyword>
<organism>
    <name type="scientific">Dictyoglomus turgidum (strain DSM 6724 / Z-1310)</name>
    <dbReference type="NCBI Taxonomy" id="515635"/>
    <lineage>
        <taxon>Bacteria</taxon>
        <taxon>Pseudomonadati</taxon>
        <taxon>Dictyoglomota</taxon>
        <taxon>Dictyoglomia</taxon>
        <taxon>Dictyoglomales</taxon>
        <taxon>Dictyoglomaceae</taxon>
        <taxon>Dictyoglomus</taxon>
    </lineage>
</organism>
<reference key="1">
    <citation type="journal article" date="2016" name="Front. Microbiol.">
        <title>The complete genome sequence of hyperthermophile Dictyoglomus turgidum DSM 6724 reveals a specialized carbohydrate fermentor.</title>
        <authorList>
            <person name="Brumm P.J."/>
            <person name="Gowda K."/>
            <person name="Robb F.T."/>
            <person name="Mead D.A."/>
        </authorList>
    </citation>
    <scope>NUCLEOTIDE SEQUENCE [LARGE SCALE GENOMIC DNA]</scope>
    <source>
        <strain>DSM 6724 / Z-1310</strain>
    </source>
</reference>
<protein>
    <recommendedName>
        <fullName evidence="1">Probable transaldolase</fullName>
        <ecNumber evidence="1">2.2.1.2</ecNumber>
    </recommendedName>
</protein>
<feature type="chain" id="PRO_1000126311" description="Probable transaldolase">
    <location>
        <begin position="1"/>
        <end position="214"/>
    </location>
</feature>
<feature type="active site" description="Schiff-base intermediate with substrate" evidence="1">
    <location>
        <position position="83"/>
    </location>
</feature>
<proteinExistence type="inferred from homology"/>
<evidence type="ECO:0000255" key="1">
    <source>
        <dbReference type="HAMAP-Rule" id="MF_00494"/>
    </source>
</evidence>
<sequence>MKLFLDTANIQEIKEAWSLGIIDGVTTNPTHISKENKKFRELIEEICSIVDGPISVEAVSLKAEEIVREAEELSKISPNIVVKIPAIKEGIKAAKILSEKGIKTNITLVFSPSQALLAGKVGATYVSPFVGRLNDISEEGINLVADIKKIYSNYGFKTQIIVSAIRNPMHVVKAALIGADVATMRFDILMSLFRHPMTDLGLEQFLKDWEKVPK</sequence>